<sequence>MMNSRISIIIALSCIMITSIRAYDPDALQDLCVADKSHGTKLNGFPCKETLNITESDFFFAGISKPAVINSTMGSAVTGANVEKIPGLNTLSVSLARIDYAPGGLNPPHTHPRATEVVYVLEGELEVGFITTANKLFTKTIKIGEVFVFPRGLVHFQKNNGKSPASVLSAFNSQLPGTASVAATLFAAEPALPEDVLTKTFQVGSKMVDKIKERLATKK</sequence>
<reference key="1">
    <citation type="journal article" date="2000" name="Nature">
        <title>Sequence and analysis of chromosome 1 of the plant Arabidopsis thaliana.</title>
        <authorList>
            <person name="Theologis A."/>
            <person name="Ecker J.R."/>
            <person name="Palm C.J."/>
            <person name="Federspiel N.A."/>
            <person name="Kaul S."/>
            <person name="White O."/>
            <person name="Alonso J."/>
            <person name="Altafi H."/>
            <person name="Araujo R."/>
            <person name="Bowman C.L."/>
            <person name="Brooks S.Y."/>
            <person name="Buehler E."/>
            <person name="Chan A."/>
            <person name="Chao Q."/>
            <person name="Chen H."/>
            <person name="Cheuk R.F."/>
            <person name="Chin C.W."/>
            <person name="Chung M.K."/>
            <person name="Conn L."/>
            <person name="Conway A.B."/>
            <person name="Conway A.R."/>
            <person name="Creasy T.H."/>
            <person name="Dewar K."/>
            <person name="Dunn P."/>
            <person name="Etgu P."/>
            <person name="Feldblyum T.V."/>
            <person name="Feng J.-D."/>
            <person name="Fong B."/>
            <person name="Fujii C.Y."/>
            <person name="Gill J.E."/>
            <person name="Goldsmith A.D."/>
            <person name="Haas B."/>
            <person name="Hansen N.F."/>
            <person name="Hughes B."/>
            <person name="Huizar L."/>
            <person name="Hunter J.L."/>
            <person name="Jenkins J."/>
            <person name="Johnson-Hopson C."/>
            <person name="Khan S."/>
            <person name="Khaykin E."/>
            <person name="Kim C.J."/>
            <person name="Koo H.L."/>
            <person name="Kremenetskaia I."/>
            <person name="Kurtz D.B."/>
            <person name="Kwan A."/>
            <person name="Lam B."/>
            <person name="Langin-Hooper S."/>
            <person name="Lee A."/>
            <person name="Lee J.M."/>
            <person name="Lenz C.A."/>
            <person name="Li J.H."/>
            <person name="Li Y.-P."/>
            <person name="Lin X."/>
            <person name="Liu S.X."/>
            <person name="Liu Z.A."/>
            <person name="Luros J.S."/>
            <person name="Maiti R."/>
            <person name="Marziali A."/>
            <person name="Militscher J."/>
            <person name="Miranda M."/>
            <person name="Nguyen M."/>
            <person name="Nierman W.C."/>
            <person name="Osborne B.I."/>
            <person name="Pai G."/>
            <person name="Peterson J."/>
            <person name="Pham P.K."/>
            <person name="Rizzo M."/>
            <person name="Rooney T."/>
            <person name="Rowley D."/>
            <person name="Sakano H."/>
            <person name="Salzberg S.L."/>
            <person name="Schwartz J.R."/>
            <person name="Shinn P."/>
            <person name="Southwick A.M."/>
            <person name="Sun H."/>
            <person name="Tallon L.J."/>
            <person name="Tambunga G."/>
            <person name="Toriumi M.J."/>
            <person name="Town C.D."/>
            <person name="Utterback T."/>
            <person name="Van Aken S."/>
            <person name="Vaysberg M."/>
            <person name="Vysotskaia V.S."/>
            <person name="Walker M."/>
            <person name="Wu D."/>
            <person name="Yu G."/>
            <person name="Fraser C.M."/>
            <person name="Venter J.C."/>
            <person name="Davis R.W."/>
        </authorList>
    </citation>
    <scope>NUCLEOTIDE SEQUENCE [LARGE SCALE GENOMIC DNA]</scope>
    <source>
        <strain>cv. Columbia</strain>
    </source>
</reference>
<reference key="2">
    <citation type="journal article" date="2017" name="Plant J.">
        <title>Araport11: a complete reannotation of the Arabidopsis thaliana reference genome.</title>
        <authorList>
            <person name="Cheng C.Y."/>
            <person name="Krishnakumar V."/>
            <person name="Chan A.P."/>
            <person name="Thibaud-Nissen F."/>
            <person name="Schobel S."/>
            <person name="Town C.D."/>
        </authorList>
    </citation>
    <scope>GENOME REANNOTATION</scope>
    <source>
        <strain>cv. Columbia</strain>
    </source>
</reference>
<reference key="3">
    <citation type="submission" date="2004-09" db="EMBL/GenBank/DDBJ databases">
        <title>Large-scale analysis of RIKEN Arabidopsis full-length (RAFL) cDNAs.</title>
        <authorList>
            <person name="Totoki Y."/>
            <person name="Seki M."/>
            <person name="Ishida J."/>
            <person name="Nakajima M."/>
            <person name="Enju A."/>
            <person name="Kamiya A."/>
            <person name="Narusaka M."/>
            <person name="Shin-i T."/>
            <person name="Nakagawa M."/>
            <person name="Sakamoto N."/>
            <person name="Oishi K."/>
            <person name="Kohara Y."/>
            <person name="Kobayashi M."/>
            <person name="Toyoda A."/>
            <person name="Sakaki Y."/>
            <person name="Sakurai T."/>
            <person name="Iida K."/>
            <person name="Akiyama K."/>
            <person name="Satou M."/>
            <person name="Toyoda T."/>
            <person name="Konagaya A."/>
            <person name="Carninci P."/>
            <person name="Kawai J."/>
            <person name="Hayashizaki Y."/>
            <person name="Shinozaki K."/>
        </authorList>
    </citation>
    <scope>NUCLEOTIDE SEQUENCE [LARGE SCALE MRNA]</scope>
    <source>
        <strain>cv. Columbia</strain>
    </source>
</reference>
<keyword id="KW-0052">Apoplast</keyword>
<keyword id="KW-1015">Disulfide bond</keyword>
<keyword id="KW-0325">Glycoprotein</keyword>
<keyword id="KW-0464">Manganese</keyword>
<keyword id="KW-0479">Metal-binding</keyword>
<keyword id="KW-1185">Reference proteome</keyword>
<keyword id="KW-0964">Secreted</keyword>
<keyword id="KW-0732">Signal</keyword>
<gene>
    <name type="ordered locus">At1g02335</name>
    <name type="ORF">T6A9.29</name>
    <name type="ORF">T6A9.3</name>
</gene>
<dbReference type="EMBL" id="AC064879">
    <property type="protein sequence ID" value="AAG00885.1"/>
    <property type="molecule type" value="Genomic_DNA"/>
</dbReference>
<dbReference type="EMBL" id="CP002684">
    <property type="protein sequence ID" value="AEE27417.1"/>
    <property type="molecule type" value="Genomic_DNA"/>
</dbReference>
<dbReference type="EMBL" id="AK176405">
    <property type="protein sequence ID" value="BAD44168.1"/>
    <property type="molecule type" value="mRNA"/>
</dbReference>
<dbReference type="PIR" id="F86153">
    <property type="entry name" value="F86153"/>
</dbReference>
<dbReference type="SMR" id="Q9FZ27"/>
<dbReference type="FunCoup" id="Q9FZ27">
    <property type="interactions" value="51"/>
</dbReference>
<dbReference type="STRING" id="3702.Q9FZ27"/>
<dbReference type="GlyGen" id="Q9FZ27">
    <property type="glycosylation" value="2 sites"/>
</dbReference>
<dbReference type="PaxDb" id="3702-AT1G02335.1"/>
<dbReference type="ProteomicsDB" id="248482"/>
<dbReference type="EnsemblPlants" id="AT1G02335.1">
    <property type="protein sequence ID" value="AT1G02335.1"/>
    <property type="gene ID" value="AT1G02335"/>
</dbReference>
<dbReference type="GeneID" id="3766642"/>
<dbReference type="Gramene" id="AT1G02335.1">
    <property type="protein sequence ID" value="AT1G02335.1"/>
    <property type="gene ID" value="AT1G02335"/>
</dbReference>
<dbReference type="KEGG" id="ath:AT1G02335"/>
<dbReference type="Araport" id="AT1G02335"/>
<dbReference type="TAIR" id="AT1G02335">
    <property type="gene designation" value="GL22"/>
</dbReference>
<dbReference type="eggNOG" id="ENOG502QQ4A">
    <property type="taxonomic scope" value="Eukaryota"/>
</dbReference>
<dbReference type="HOGENOM" id="CLU_015790_0_3_1"/>
<dbReference type="InParanoid" id="Q9FZ27"/>
<dbReference type="OMA" id="CVADISH"/>
<dbReference type="PhylomeDB" id="Q9FZ27"/>
<dbReference type="PRO" id="PR:Q9FZ27"/>
<dbReference type="Proteomes" id="UP000006548">
    <property type="component" value="Chromosome 1"/>
</dbReference>
<dbReference type="ExpressionAtlas" id="Q9FZ27">
    <property type="expression patterns" value="baseline and differential"/>
</dbReference>
<dbReference type="GO" id="GO:0048046">
    <property type="term" value="C:apoplast"/>
    <property type="evidence" value="ECO:0007669"/>
    <property type="project" value="UniProtKB-SubCell"/>
</dbReference>
<dbReference type="GO" id="GO:0009506">
    <property type="term" value="C:plasmodesma"/>
    <property type="evidence" value="ECO:0000314"/>
    <property type="project" value="TAIR"/>
</dbReference>
<dbReference type="GO" id="GO:0030145">
    <property type="term" value="F:manganese ion binding"/>
    <property type="evidence" value="ECO:0007669"/>
    <property type="project" value="InterPro"/>
</dbReference>
<dbReference type="GO" id="GO:0010497">
    <property type="term" value="P:plasmodesmata-mediated intercellular transport"/>
    <property type="evidence" value="ECO:0000315"/>
    <property type="project" value="TAIR"/>
</dbReference>
<dbReference type="GO" id="GO:2000280">
    <property type="term" value="P:regulation of root development"/>
    <property type="evidence" value="ECO:0000315"/>
    <property type="project" value="TAIR"/>
</dbReference>
<dbReference type="CDD" id="cd02241">
    <property type="entry name" value="cupin_OxOx"/>
    <property type="match status" value="1"/>
</dbReference>
<dbReference type="FunFam" id="2.60.120.10:FF:000025">
    <property type="entry name" value="germin-like protein subfamily 2 member 1"/>
    <property type="match status" value="1"/>
</dbReference>
<dbReference type="Gene3D" id="2.60.120.10">
    <property type="entry name" value="Jelly Rolls"/>
    <property type="match status" value="1"/>
</dbReference>
<dbReference type="InterPro" id="IPR006045">
    <property type="entry name" value="Cupin_1"/>
</dbReference>
<dbReference type="InterPro" id="IPR001929">
    <property type="entry name" value="Germin"/>
</dbReference>
<dbReference type="InterPro" id="IPR019780">
    <property type="entry name" value="Germin_Mn-BS"/>
</dbReference>
<dbReference type="InterPro" id="IPR014710">
    <property type="entry name" value="RmlC-like_jellyroll"/>
</dbReference>
<dbReference type="InterPro" id="IPR011051">
    <property type="entry name" value="RmlC_Cupin_sf"/>
</dbReference>
<dbReference type="PANTHER" id="PTHR31238">
    <property type="entry name" value="GERMIN-LIKE PROTEIN SUBFAMILY 3 MEMBER 3"/>
    <property type="match status" value="1"/>
</dbReference>
<dbReference type="Pfam" id="PF00190">
    <property type="entry name" value="Cupin_1"/>
    <property type="match status" value="1"/>
</dbReference>
<dbReference type="PRINTS" id="PR00325">
    <property type="entry name" value="GERMIN"/>
</dbReference>
<dbReference type="SMART" id="SM00835">
    <property type="entry name" value="Cupin_1"/>
    <property type="match status" value="1"/>
</dbReference>
<dbReference type="SUPFAM" id="SSF51182">
    <property type="entry name" value="RmlC-like cupins"/>
    <property type="match status" value="1"/>
</dbReference>
<dbReference type="PROSITE" id="PS00725">
    <property type="entry name" value="GERMIN"/>
    <property type="match status" value="1"/>
</dbReference>
<evidence type="ECO:0000250" key="1"/>
<evidence type="ECO:0000255" key="2"/>
<evidence type="ECO:0000305" key="3"/>
<proteinExistence type="evidence at transcript level"/>
<accession>Q9FZ27</accession>
<accession>Q67YR3</accession>
<comment type="function">
    <text>May play a role in plant defense. Probably has no oxalate oxidase activity even if the active site is conserved.</text>
</comment>
<comment type="subunit">
    <text evidence="1">Oligomer (believed to be a pentamer but probably hexamer).</text>
</comment>
<comment type="subcellular location">
    <subcellularLocation>
        <location evidence="1">Secreted</location>
        <location evidence="1">Extracellular space</location>
        <location evidence="1">Apoplast</location>
    </subcellularLocation>
</comment>
<comment type="similarity">
    <text evidence="3">Belongs to the germin family.</text>
</comment>
<name>GL22_ARATH</name>
<feature type="signal peptide" evidence="2">
    <location>
        <begin position="1"/>
        <end position="22"/>
    </location>
</feature>
<feature type="chain" id="PRO_0000010822" description="Germin-like protein subfamily 2 member 2">
    <location>
        <begin position="23"/>
        <end position="219"/>
    </location>
</feature>
<feature type="domain" description="Cupin type-1" evidence="2">
    <location>
        <begin position="59"/>
        <end position="209"/>
    </location>
</feature>
<feature type="binding site" evidence="1">
    <location>
        <position position="109"/>
    </location>
    <ligand>
        <name>Mn(2+)</name>
        <dbReference type="ChEBI" id="CHEBI:29035"/>
    </ligand>
</feature>
<feature type="binding site" evidence="1">
    <location>
        <position position="111"/>
    </location>
    <ligand>
        <name>Mn(2+)</name>
        <dbReference type="ChEBI" id="CHEBI:29035"/>
    </ligand>
</feature>
<feature type="binding site" evidence="1">
    <location>
        <position position="116"/>
    </location>
    <ligand>
        <name>Mn(2+)</name>
        <dbReference type="ChEBI" id="CHEBI:29035"/>
    </ligand>
</feature>
<feature type="binding site" evidence="1">
    <location>
        <position position="155"/>
    </location>
    <ligand>
        <name>Mn(2+)</name>
        <dbReference type="ChEBI" id="CHEBI:29035"/>
    </ligand>
</feature>
<feature type="glycosylation site" description="N-linked (GlcNAc...) asparagine" evidence="2">
    <location>
        <position position="52"/>
    </location>
</feature>
<feature type="glycosylation site" description="N-linked (GlcNAc...) asparagine" evidence="2">
    <location>
        <position position="70"/>
    </location>
</feature>
<feature type="disulfide bond" evidence="1">
    <location>
        <begin position="32"/>
        <end position="47"/>
    </location>
</feature>
<protein>
    <recommendedName>
        <fullName>Germin-like protein subfamily 2 member 2</fullName>
    </recommendedName>
</protein>
<organism>
    <name type="scientific">Arabidopsis thaliana</name>
    <name type="common">Mouse-ear cress</name>
    <dbReference type="NCBI Taxonomy" id="3702"/>
    <lineage>
        <taxon>Eukaryota</taxon>
        <taxon>Viridiplantae</taxon>
        <taxon>Streptophyta</taxon>
        <taxon>Embryophyta</taxon>
        <taxon>Tracheophyta</taxon>
        <taxon>Spermatophyta</taxon>
        <taxon>Magnoliopsida</taxon>
        <taxon>eudicotyledons</taxon>
        <taxon>Gunneridae</taxon>
        <taxon>Pentapetalae</taxon>
        <taxon>rosids</taxon>
        <taxon>malvids</taxon>
        <taxon>Brassicales</taxon>
        <taxon>Brassicaceae</taxon>
        <taxon>Camelineae</taxon>
        <taxon>Arabidopsis</taxon>
    </lineage>
</organism>